<keyword id="KW-0131">Cell cycle</keyword>
<keyword id="KW-0132">Cell division</keyword>
<keyword id="KW-0143">Chaperone</keyword>
<keyword id="KW-0963">Cytoplasm</keyword>
<keyword id="KW-0413">Isomerase</keyword>
<keyword id="KW-1185">Reference proteome</keyword>
<keyword id="KW-0697">Rotamase</keyword>
<gene>
    <name evidence="1" type="primary">tig</name>
    <name type="ordered locus">CTC_02376</name>
</gene>
<accession>Q891J6</accession>
<proteinExistence type="inferred from homology"/>
<sequence>MKVSMEKIENNVVKLEVTVEAKKFNEAMKKSYAKNVKKFNVPGFRKGKAPMSIIKRYYGETVFYEDAINICCDDTYPKALEEKEIKPVDYPQIDIVEIGEGKDFVYTAQVTVMPEVELGEYKGLEAKKVSYDVKDEDVENTLKEMQQRNARIQTKEDEEAIEKGNIAVIDFKGYVDEVPFEGGEGYDYSLEIGSGTFIDNFEDQLIGAKKGEEKEVKVKFPEEYGSEELNGKEAKFQVTIKEIKVKELPAIDDEFVKEVSEFDTLDELKEDIKAKIKEGNDKRAKAEYEETVINLACENAKVDIPEVMVENEINNMLKDLEMKLRYQGIDLETYYQYTNSTEEKVREYMKEAATKRVKTDLVLAEVAKAEKLEATDEEIMDRAKEMAKQYGSGELEKTAKLLADSQNALLKADVINEKVVKLIVDNSKEIE</sequence>
<name>TIG_CLOTE</name>
<dbReference type="EC" id="5.2.1.8" evidence="1"/>
<dbReference type="EMBL" id="AE015927">
    <property type="protein sequence ID" value="AAO36849.1"/>
    <property type="status" value="ALT_INIT"/>
    <property type="molecule type" value="Genomic_DNA"/>
</dbReference>
<dbReference type="RefSeq" id="WP_035108880.1">
    <property type="nucleotide sequence ID" value="NC_004557.1"/>
</dbReference>
<dbReference type="SMR" id="Q891J6"/>
<dbReference type="STRING" id="212717.CTC_02376"/>
<dbReference type="GeneID" id="24253442"/>
<dbReference type="KEGG" id="ctc:CTC_02376"/>
<dbReference type="HOGENOM" id="CLU_033058_3_2_9"/>
<dbReference type="OrthoDB" id="9767721at2"/>
<dbReference type="Proteomes" id="UP000001412">
    <property type="component" value="Chromosome"/>
</dbReference>
<dbReference type="GO" id="GO:0005737">
    <property type="term" value="C:cytoplasm"/>
    <property type="evidence" value="ECO:0007669"/>
    <property type="project" value="UniProtKB-SubCell"/>
</dbReference>
<dbReference type="GO" id="GO:0003755">
    <property type="term" value="F:peptidyl-prolyl cis-trans isomerase activity"/>
    <property type="evidence" value="ECO:0007669"/>
    <property type="project" value="UniProtKB-UniRule"/>
</dbReference>
<dbReference type="GO" id="GO:0044183">
    <property type="term" value="F:protein folding chaperone"/>
    <property type="evidence" value="ECO:0007669"/>
    <property type="project" value="TreeGrafter"/>
</dbReference>
<dbReference type="GO" id="GO:0043022">
    <property type="term" value="F:ribosome binding"/>
    <property type="evidence" value="ECO:0007669"/>
    <property type="project" value="TreeGrafter"/>
</dbReference>
<dbReference type="GO" id="GO:0051083">
    <property type="term" value="P:'de novo' cotranslational protein folding"/>
    <property type="evidence" value="ECO:0007669"/>
    <property type="project" value="TreeGrafter"/>
</dbReference>
<dbReference type="GO" id="GO:0051301">
    <property type="term" value="P:cell division"/>
    <property type="evidence" value="ECO:0007669"/>
    <property type="project" value="UniProtKB-KW"/>
</dbReference>
<dbReference type="GO" id="GO:0061077">
    <property type="term" value="P:chaperone-mediated protein folding"/>
    <property type="evidence" value="ECO:0007669"/>
    <property type="project" value="TreeGrafter"/>
</dbReference>
<dbReference type="GO" id="GO:0015031">
    <property type="term" value="P:protein transport"/>
    <property type="evidence" value="ECO:0007669"/>
    <property type="project" value="UniProtKB-UniRule"/>
</dbReference>
<dbReference type="GO" id="GO:0043335">
    <property type="term" value="P:protein unfolding"/>
    <property type="evidence" value="ECO:0007669"/>
    <property type="project" value="TreeGrafter"/>
</dbReference>
<dbReference type="FunFam" id="3.10.50.40:FF:000001">
    <property type="entry name" value="Trigger factor"/>
    <property type="match status" value="1"/>
</dbReference>
<dbReference type="Gene3D" id="3.10.50.40">
    <property type="match status" value="1"/>
</dbReference>
<dbReference type="Gene3D" id="3.30.70.1050">
    <property type="entry name" value="Trigger factor ribosome-binding domain"/>
    <property type="match status" value="1"/>
</dbReference>
<dbReference type="Gene3D" id="1.10.3120.10">
    <property type="entry name" value="Trigger factor, C-terminal domain"/>
    <property type="match status" value="1"/>
</dbReference>
<dbReference type="HAMAP" id="MF_00303">
    <property type="entry name" value="Trigger_factor_Tig"/>
    <property type="match status" value="1"/>
</dbReference>
<dbReference type="InterPro" id="IPR046357">
    <property type="entry name" value="PPIase_dom_sf"/>
</dbReference>
<dbReference type="InterPro" id="IPR001179">
    <property type="entry name" value="PPIase_FKBP_dom"/>
</dbReference>
<dbReference type="InterPro" id="IPR005215">
    <property type="entry name" value="Trig_fac"/>
</dbReference>
<dbReference type="InterPro" id="IPR008880">
    <property type="entry name" value="Trigger_fac_C"/>
</dbReference>
<dbReference type="InterPro" id="IPR037041">
    <property type="entry name" value="Trigger_fac_C_sf"/>
</dbReference>
<dbReference type="InterPro" id="IPR008881">
    <property type="entry name" value="Trigger_fac_ribosome-bd_bac"/>
</dbReference>
<dbReference type="InterPro" id="IPR036611">
    <property type="entry name" value="Trigger_fac_ribosome-bd_sf"/>
</dbReference>
<dbReference type="InterPro" id="IPR027304">
    <property type="entry name" value="Trigger_fact/SurA_dom_sf"/>
</dbReference>
<dbReference type="NCBIfam" id="TIGR00115">
    <property type="entry name" value="tig"/>
    <property type="match status" value="1"/>
</dbReference>
<dbReference type="PANTHER" id="PTHR30560">
    <property type="entry name" value="TRIGGER FACTOR CHAPERONE AND PEPTIDYL-PROLYL CIS/TRANS ISOMERASE"/>
    <property type="match status" value="1"/>
</dbReference>
<dbReference type="PANTHER" id="PTHR30560:SF3">
    <property type="entry name" value="TRIGGER FACTOR-LIKE PROTEIN TIG, CHLOROPLASTIC"/>
    <property type="match status" value="1"/>
</dbReference>
<dbReference type="Pfam" id="PF00254">
    <property type="entry name" value="FKBP_C"/>
    <property type="match status" value="1"/>
</dbReference>
<dbReference type="Pfam" id="PF05698">
    <property type="entry name" value="Trigger_C"/>
    <property type="match status" value="1"/>
</dbReference>
<dbReference type="Pfam" id="PF05697">
    <property type="entry name" value="Trigger_N"/>
    <property type="match status" value="1"/>
</dbReference>
<dbReference type="PIRSF" id="PIRSF003095">
    <property type="entry name" value="Trigger_factor"/>
    <property type="match status" value="1"/>
</dbReference>
<dbReference type="SUPFAM" id="SSF54534">
    <property type="entry name" value="FKBP-like"/>
    <property type="match status" value="1"/>
</dbReference>
<dbReference type="SUPFAM" id="SSF109998">
    <property type="entry name" value="Triger factor/SurA peptide-binding domain-like"/>
    <property type="match status" value="1"/>
</dbReference>
<dbReference type="SUPFAM" id="SSF102735">
    <property type="entry name" value="Trigger factor ribosome-binding domain"/>
    <property type="match status" value="1"/>
</dbReference>
<dbReference type="PROSITE" id="PS50059">
    <property type="entry name" value="FKBP_PPIASE"/>
    <property type="match status" value="1"/>
</dbReference>
<organism>
    <name type="scientific">Clostridium tetani (strain Massachusetts / E88)</name>
    <dbReference type="NCBI Taxonomy" id="212717"/>
    <lineage>
        <taxon>Bacteria</taxon>
        <taxon>Bacillati</taxon>
        <taxon>Bacillota</taxon>
        <taxon>Clostridia</taxon>
        <taxon>Eubacteriales</taxon>
        <taxon>Clostridiaceae</taxon>
        <taxon>Clostridium</taxon>
    </lineage>
</organism>
<reference key="1">
    <citation type="journal article" date="2003" name="Proc. Natl. Acad. Sci. U.S.A.">
        <title>The genome sequence of Clostridium tetani, the causative agent of tetanus disease.</title>
        <authorList>
            <person name="Brueggemann H."/>
            <person name="Baeumer S."/>
            <person name="Fricke W.F."/>
            <person name="Wiezer A."/>
            <person name="Liesegang H."/>
            <person name="Decker I."/>
            <person name="Herzberg C."/>
            <person name="Martinez-Arias R."/>
            <person name="Merkl R."/>
            <person name="Henne A."/>
            <person name="Gottschalk G."/>
        </authorList>
    </citation>
    <scope>NUCLEOTIDE SEQUENCE [LARGE SCALE GENOMIC DNA]</scope>
    <source>
        <strain>Massachusetts / E88</strain>
    </source>
</reference>
<feature type="chain" id="PRO_0000179339" description="Trigger factor">
    <location>
        <begin position="1"/>
        <end position="431"/>
    </location>
</feature>
<feature type="domain" description="PPIase FKBP-type" evidence="1">
    <location>
        <begin position="164"/>
        <end position="249"/>
    </location>
</feature>
<comment type="function">
    <text evidence="1">Involved in protein export. Acts as a chaperone by maintaining the newly synthesized protein in an open conformation. Functions as a peptidyl-prolyl cis-trans isomerase.</text>
</comment>
<comment type="catalytic activity">
    <reaction evidence="1">
        <text>[protein]-peptidylproline (omega=180) = [protein]-peptidylproline (omega=0)</text>
        <dbReference type="Rhea" id="RHEA:16237"/>
        <dbReference type="Rhea" id="RHEA-COMP:10747"/>
        <dbReference type="Rhea" id="RHEA-COMP:10748"/>
        <dbReference type="ChEBI" id="CHEBI:83833"/>
        <dbReference type="ChEBI" id="CHEBI:83834"/>
        <dbReference type="EC" id="5.2.1.8"/>
    </reaction>
</comment>
<comment type="subcellular location">
    <subcellularLocation>
        <location>Cytoplasm</location>
    </subcellularLocation>
    <text evidence="1">About half TF is bound to the ribosome near the polypeptide exit tunnel while the other half is free in the cytoplasm.</text>
</comment>
<comment type="domain">
    <text evidence="1">Consists of 3 domains; the N-terminus binds the ribosome, the middle domain has PPIase activity, while the C-terminus has intrinsic chaperone activity on its own.</text>
</comment>
<comment type="similarity">
    <text evidence="1">Belongs to the FKBP-type PPIase family. Tig subfamily.</text>
</comment>
<comment type="sequence caution" evidence="2">
    <conflict type="erroneous initiation">
        <sequence resource="EMBL-CDS" id="AAO36849"/>
    </conflict>
</comment>
<evidence type="ECO:0000255" key="1">
    <source>
        <dbReference type="HAMAP-Rule" id="MF_00303"/>
    </source>
</evidence>
<evidence type="ECO:0000305" key="2"/>
<protein>
    <recommendedName>
        <fullName evidence="1">Trigger factor</fullName>
        <shortName evidence="1">TF</shortName>
        <ecNumber evidence="1">5.2.1.8</ecNumber>
    </recommendedName>
    <alternativeName>
        <fullName evidence="1">PPIase</fullName>
    </alternativeName>
</protein>